<protein>
    <recommendedName>
        <fullName>SLP adapter and CSK-interacting membrane protein</fullName>
    </recommendedName>
    <alternativeName>
        <fullName>SLP65/SLP76, Csk-interacting membrane protein</fullName>
    </alternativeName>
</protein>
<keyword id="KW-0025">Alternative splicing</keyword>
<keyword id="KW-1003">Cell membrane</keyword>
<keyword id="KW-0966">Cell projection</keyword>
<keyword id="KW-0968">Cytoplasmic vesicle</keyword>
<keyword id="KW-0449">Lipoprotein</keyword>
<keyword id="KW-0472">Membrane</keyword>
<keyword id="KW-0564">Palmitate</keyword>
<keyword id="KW-0597">Phosphoprotein</keyword>
<keyword id="KW-1267">Proteomics identification</keyword>
<keyword id="KW-1185">Reference proteome</keyword>
<keyword id="KW-0812">Transmembrane</keyword>
<keyword id="KW-1133">Transmembrane helix</keyword>
<dbReference type="EMBL" id="AY358809">
    <property type="protein sequence ID" value="AAQ89169.1"/>
    <property type="molecule type" value="mRNA"/>
</dbReference>
<dbReference type="EMBL" id="AK057142">
    <property type="status" value="NOT_ANNOTATED_CDS"/>
    <property type="molecule type" value="mRNA"/>
</dbReference>
<dbReference type="EMBL" id="AK297035">
    <property type="protein sequence ID" value="BAG59563.1"/>
    <property type="molecule type" value="mRNA"/>
</dbReference>
<dbReference type="EMBL" id="DQ778084">
    <property type="protein sequence ID" value="ABI63348.1"/>
    <property type="molecule type" value="mRNA"/>
</dbReference>
<dbReference type="EMBL" id="AC087500">
    <property type="status" value="NOT_ANNOTATED_CDS"/>
    <property type="molecule type" value="Genomic_DNA"/>
</dbReference>
<dbReference type="EMBL" id="CH471108">
    <property type="protein sequence ID" value="EAW90349.1"/>
    <property type="molecule type" value="Genomic_DNA"/>
</dbReference>
<dbReference type="EMBL" id="CH471108">
    <property type="protein sequence ID" value="EAW90350.1"/>
    <property type="molecule type" value="Genomic_DNA"/>
</dbReference>
<dbReference type="EMBL" id="BC127925">
    <property type="protein sequence ID" value="AAI27926.1"/>
    <property type="molecule type" value="mRNA"/>
</dbReference>
<dbReference type="EMBL" id="BC130554">
    <property type="protein sequence ID" value="AAI30555.1"/>
    <property type="molecule type" value="mRNA"/>
</dbReference>
<dbReference type="EMBL" id="BC130556">
    <property type="protein sequence ID" value="AAI30557.1"/>
    <property type="molecule type" value="mRNA"/>
</dbReference>
<dbReference type="EMBL" id="BC144395">
    <property type="protein sequence ID" value="AAI44396.1"/>
    <property type="molecule type" value="mRNA"/>
</dbReference>
<dbReference type="CCDS" id="CCDS42242.1">
    <molecule id="Q6UWF3-1"/>
</dbReference>
<dbReference type="CCDS" id="CCDS62044.1">
    <molecule id="Q6UWF3-3"/>
</dbReference>
<dbReference type="CCDS" id="CCDS82046.1">
    <molecule id="Q6UWF3-2"/>
</dbReference>
<dbReference type="RefSeq" id="NP_001258771.1">
    <molecule id="Q6UWF3-3"/>
    <property type="nucleotide sequence ID" value="NM_001271842.1"/>
</dbReference>
<dbReference type="RefSeq" id="NP_001306119.1">
    <molecule id="Q6UWF3-2"/>
    <property type="nucleotide sequence ID" value="NM_001319190.2"/>
</dbReference>
<dbReference type="RefSeq" id="NP_996986.1">
    <molecule id="Q6UWF3-1"/>
    <property type="nucleotide sequence ID" value="NM_207103.3"/>
</dbReference>
<dbReference type="SMR" id="Q6UWF3"/>
<dbReference type="BioGRID" id="132643">
    <property type="interactions" value="6"/>
</dbReference>
<dbReference type="CORUM" id="Q6UWF3"/>
<dbReference type="FunCoup" id="Q6UWF3">
    <property type="interactions" value="33"/>
</dbReference>
<dbReference type="IntAct" id="Q6UWF3">
    <property type="interactions" value="11"/>
</dbReference>
<dbReference type="STRING" id="9606.ENSP00000461269"/>
<dbReference type="iPTMnet" id="Q6UWF3"/>
<dbReference type="PhosphoSitePlus" id="Q6UWF3"/>
<dbReference type="SwissPalm" id="Q6UWF3"/>
<dbReference type="BioMuta" id="SCIMP"/>
<dbReference type="DMDM" id="74738081"/>
<dbReference type="MassIVE" id="Q6UWF3"/>
<dbReference type="PaxDb" id="9606-ENSP00000461269"/>
<dbReference type="PeptideAtlas" id="Q6UWF3"/>
<dbReference type="ProteomicsDB" id="67470">
    <molecule id="Q6UWF3-1"/>
</dbReference>
<dbReference type="ProteomicsDB" id="67471">
    <molecule id="Q6UWF3-2"/>
</dbReference>
<dbReference type="Antibodypedia" id="1618">
    <property type="antibodies" value="86 antibodies from 16 providers"/>
</dbReference>
<dbReference type="DNASU" id="388325"/>
<dbReference type="Ensembl" id="ENST00000399600.8">
    <molecule id="Q6UWF3-3"/>
    <property type="protein sequence ID" value="ENSP00000382509.4"/>
    <property type="gene ID" value="ENSG00000161929.15"/>
</dbReference>
<dbReference type="Ensembl" id="ENST00000571800.5">
    <molecule id="Q6UWF3-2"/>
    <property type="protein sequence ID" value="ENSP00000459605.1"/>
    <property type="gene ID" value="ENSG00000161929.15"/>
</dbReference>
<dbReference type="Ensembl" id="ENST00000574081.6">
    <molecule id="Q6UWF3-1"/>
    <property type="protein sequence ID" value="ENSP00000461269.1"/>
    <property type="gene ID" value="ENSG00000161929.15"/>
</dbReference>
<dbReference type="GeneID" id="388325"/>
<dbReference type="KEGG" id="hsa:388325"/>
<dbReference type="MANE-Select" id="ENST00000574081.6">
    <property type="protein sequence ID" value="ENSP00000461269.1"/>
    <property type="RefSeq nucleotide sequence ID" value="NM_207103.3"/>
    <property type="RefSeq protein sequence ID" value="NP_996986.1"/>
</dbReference>
<dbReference type="UCSC" id="uc002gbh.4">
    <molecule id="Q6UWF3-1"/>
    <property type="organism name" value="human"/>
</dbReference>
<dbReference type="AGR" id="HGNC:33504"/>
<dbReference type="CTD" id="388325"/>
<dbReference type="DisGeNET" id="388325"/>
<dbReference type="GeneCards" id="SCIMP"/>
<dbReference type="HGNC" id="HGNC:33504">
    <property type="gene designation" value="SCIMP"/>
</dbReference>
<dbReference type="HPA" id="ENSG00000161929">
    <property type="expression patterns" value="Tissue enhanced (lymphoid)"/>
</dbReference>
<dbReference type="MIM" id="614406">
    <property type="type" value="gene"/>
</dbReference>
<dbReference type="neXtProt" id="NX_Q6UWF3"/>
<dbReference type="NIAGADS" id="ENSG00000161929"/>
<dbReference type="OpenTargets" id="ENSG00000161929"/>
<dbReference type="PharmGKB" id="PA162378517"/>
<dbReference type="VEuPathDB" id="HostDB:ENSG00000161929"/>
<dbReference type="eggNOG" id="ENOG502T3K5">
    <property type="taxonomic scope" value="Eukaryota"/>
</dbReference>
<dbReference type="GeneTree" id="ENSGT00390000007003"/>
<dbReference type="HOGENOM" id="CLU_1781827_0_0_1"/>
<dbReference type="InParanoid" id="Q6UWF3"/>
<dbReference type="OMA" id="NYFWIIL"/>
<dbReference type="OrthoDB" id="9835673at2759"/>
<dbReference type="PAN-GO" id="Q6UWF3">
    <property type="GO annotations" value="1 GO annotation based on evolutionary models"/>
</dbReference>
<dbReference type="PhylomeDB" id="Q6UWF3"/>
<dbReference type="TreeFam" id="TF340362"/>
<dbReference type="PathwayCommons" id="Q6UWF3"/>
<dbReference type="SignaLink" id="Q6UWF3"/>
<dbReference type="BioGRID-ORCS" id="388325">
    <property type="hits" value="9 hits in 1144 CRISPR screens"/>
</dbReference>
<dbReference type="ChiTaRS" id="SCIMP">
    <property type="organism name" value="human"/>
</dbReference>
<dbReference type="GenomeRNAi" id="388325"/>
<dbReference type="Pharos" id="Q6UWF3">
    <property type="development level" value="Tbio"/>
</dbReference>
<dbReference type="PRO" id="PR:Q6UWF3"/>
<dbReference type="Proteomes" id="UP000005640">
    <property type="component" value="Chromosome 17"/>
</dbReference>
<dbReference type="RNAct" id="Q6UWF3">
    <property type="molecule type" value="protein"/>
</dbReference>
<dbReference type="Bgee" id="ENSG00000161929">
    <property type="expression patterns" value="Expressed in monocyte and 106 other cell types or tissues"/>
</dbReference>
<dbReference type="ExpressionAtlas" id="Q6UWF3">
    <property type="expression patterns" value="baseline and differential"/>
</dbReference>
<dbReference type="GO" id="GO:0030175">
    <property type="term" value="C:filopodium"/>
    <property type="evidence" value="ECO:0007669"/>
    <property type="project" value="UniProtKB-SubCell"/>
</dbReference>
<dbReference type="GO" id="GO:0001772">
    <property type="term" value="C:immunological synapse"/>
    <property type="evidence" value="ECO:0000314"/>
    <property type="project" value="UniProtKB"/>
</dbReference>
<dbReference type="GO" id="GO:0031256">
    <property type="term" value="C:leading edge membrane"/>
    <property type="evidence" value="ECO:0000314"/>
    <property type="project" value="UniProtKB"/>
</dbReference>
<dbReference type="GO" id="GO:0016020">
    <property type="term" value="C:membrane"/>
    <property type="evidence" value="ECO:0000314"/>
    <property type="project" value="UniProtKB"/>
</dbReference>
<dbReference type="GO" id="GO:0045335">
    <property type="term" value="C:phagocytic vesicle"/>
    <property type="evidence" value="ECO:0000250"/>
    <property type="project" value="UniProtKB"/>
</dbReference>
<dbReference type="GO" id="GO:0043235">
    <property type="term" value="C:receptor complex"/>
    <property type="evidence" value="ECO:0000250"/>
    <property type="project" value="UniProtKB"/>
</dbReference>
<dbReference type="GO" id="GO:0001726">
    <property type="term" value="C:ruffle"/>
    <property type="evidence" value="ECO:0007669"/>
    <property type="project" value="UniProtKB-SubCell"/>
</dbReference>
<dbReference type="GO" id="GO:0097197">
    <property type="term" value="C:tetraspanin-enriched microdomain"/>
    <property type="evidence" value="ECO:0000314"/>
    <property type="project" value="UniProtKB"/>
</dbReference>
<dbReference type="GO" id="GO:0031259">
    <property type="term" value="C:uropod membrane"/>
    <property type="evidence" value="ECO:0000314"/>
    <property type="project" value="UniProtKB"/>
</dbReference>
<dbReference type="GO" id="GO:0060090">
    <property type="term" value="F:molecular adaptor activity"/>
    <property type="evidence" value="ECO:0000250"/>
    <property type="project" value="UniProtKB"/>
</dbReference>
<dbReference type="GO" id="GO:0071226">
    <property type="term" value="P:cellular response to molecule of fungal origin"/>
    <property type="evidence" value="ECO:0000250"/>
    <property type="project" value="UniProtKB"/>
</dbReference>
<dbReference type="GO" id="GO:0002720">
    <property type="term" value="P:positive regulation of cytokine production involved in immune response"/>
    <property type="evidence" value="ECO:0000250"/>
    <property type="project" value="UniProtKB"/>
</dbReference>
<dbReference type="GO" id="GO:0002732">
    <property type="term" value="P:positive regulation of dendritic cell cytokine production"/>
    <property type="evidence" value="ECO:0000250"/>
    <property type="project" value="UniProtKB"/>
</dbReference>
<dbReference type="GO" id="GO:0070374">
    <property type="term" value="P:positive regulation of ERK1 and ERK2 cascade"/>
    <property type="evidence" value="ECO:0000314"/>
    <property type="project" value="UniProtKB"/>
</dbReference>
<dbReference type="GO" id="GO:0032735">
    <property type="term" value="P:positive regulation of interleukin-12 production"/>
    <property type="evidence" value="ECO:0000250"/>
    <property type="project" value="UniProtKB"/>
</dbReference>
<dbReference type="GO" id="GO:0032755">
    <property type="term" value="P:positive regulation of interleukin-6 production"/>
    <property type="evidence" value="ECO:0000250"/>
    <property type="project" value="UniProtKB"/>
</dbReference>
<dbReference type="GO" id="GO:0031666">
    <property type="term" value="P:positive regulation of lipopolysaccharide-mediated signaling pathway"/>
    <property type="evidence" value="ECO:0000250"/>
    <property type="project" value="UniProtKB"/>
</dbReference>
<dbReference type="GO" id="GO:0032874">
    <property type="term" value="P:positive regulation of stress-activated MAPK cascade"/>
    <property type="evidence" value="ECO:0000250"/>
    <property type="project" value="UniProtKB"/>
</dbReference>
<dbReference type="GO" id="GO:0034138">
    <property type="term" value="P:toll-like receptor 3 signaling pathway"/>
    <property type="evidence" value="ECO:0000250"/>
    <property type="project" value="UniProtKB"/>
</dbReference>
<dbReference type="GO" id="GO:0034142">
    <property type="term" value="P:toll-like receptor 4 signaling pathway"/>
    <property type="evidence" value="ECO:0000250"/>
    <property type="project" value="UniProtKB"/>
</dbReference>
<dbReference type="GO" id="GO:0034154">
    <property type="term" value="P:toll-like receptor 7 signaling pathway"/>
    <property type="evidence" value="ECO:0000250"/>
    <property type="project" value="UniProtKB"/>
</dbReference>
<dbReference type="GO" id="GO:0038123">
    <property type="term" value="P:toll-like receptor TLR1:TLR2 signaling pathway"/>
    <property type="evidence" value="ECO:0000250"/>
    <property type="project" value="UniProtKB"/>
</dbReference>
<dbReference type="InterPro" id="IPR052133">
    <property type="entry name" value="Immune_Signaling-Apoptosis_Reg"/>
</dbReference>
<dbReference type="InterPro" id="IPR028181">
    <property type="entry name" value="SCIMP"/>
</dbReference>
<dbReference type="PANTHER" id="PTHR12044">
    <property type="entry name" value="BCL2 INTERACTING MEDIATOR OF CELL DEATH"/>
    <property type="match status" value="1"/>
</dbReference>
<dbReference type="PANTHER" id="PTHR12044:SF11">
    <property type="entry name" value="SLP ADAPTER AND CSK-INTERACTING MEMBRANE PROTEIN"/>
    <property type="match status" value="1"/>
</dbReference>
<dbReference type="Pfam" id="PF15050">
    <property type="entry name" value="SCIMP"/>
    <property type="match status" value="1"/>
</dbReference>
<accession>Q6UWF3</accession>
<accession>A6XGL4</accession>
<accession>B4DLK1</accession>
<accession>Q96MD0</accession>
<name>SCIMP_HUMAN</name>
<organism>
    <name type="scientific">Homo sapiens</name>
    <name type="common">Human</name>
    <dbReference type="NCBI Taxonomy" id="9606"/>
    <lineage>
        <taxon>Eukaryota</taxon>
        <taxon>Metazoa</taxon>
        <taxon>Chordata</taxon>
        <taxon>Craniata</taxon>
        <taxon>Vertebrata</taxon>
        <taxon>Euteleostomi</taxon>
        <taxon>Mammalia</taxon>
        <taxon>Eutheria</taxon>
        <taxon>Euarchontoglires</taxon>
        <taxon>Primates</taxon>
        <taxon>Haplorrhini</taxon>
        <taxon>Catarrhini</taxon>
        <taxon>Hominidae</taxon>
        <taxon>Homo</taxon>
    </lineage>
</organism>
<feature type="chain" id="PRO_0000295237" description="SLP adapter and CSK-interacting membrane protein">
    <location>
        <begin position="1"/>
        <end position="145"/>
    </location>
</feature>
<feature type="transmembrane region" description="Helical" evidence="2">
    <location>
        <begin position="19"/>
        <end position="39"/>
    </location>
</feature>
<feature type="region of interest" description="Disordered" evidence="3">
    <location>
        <begin position="74"/>
        <end position="107"/>
    </location>
</feature>
<feature type="region of interest" description="Proline-rich region necessary for constitutive interaction with LYN" evidence="4">
    <location>
        <begin position="81"/>
        <end position="86"/>
    </location>
</feature>
<feature type="region of interest" description="Interaction with TLR4" evidence="1">
    <location>
        <begin position="104"/>
        <end position="145"/>
    </location>
</feature>
<feature type="modified residue" description="Phosphotyrosine" evidence="4">
    <location>
        <position position="69"/>
    </location>
</feature>
<feature type="modified residue" description="Phosphoserine" evidence="1">
    <location>
        <position position="76"/>
    </location>
</feature>
<feature type="modified residue" description="Phosphotyrosine" evidence="4">
    <location>
        <position position="107"/>
    </location>
</feature>
<feature type="modified residue" description="Phosphotyrosine" evidence="4">
    <location>
        <position position="131"/>
    </location>
</feature>
<feature type="lipid moiety-binding region" description="S-palmitoyl cysteine" evidence="9">
    <location>
        <position position="40"/>
    </location>
</feature>
<feature type="lipid moiety-binding region" description="S-palmitoyl cysteine" evidence="9">
    <location>
        <position position="42"/>
    </location>
</feature>
<feature type="splice variant" id="VSP_026853" description="In isoform 2 and isoform 3." evidence="5 6 7">
    <location>
        <begin position="43"/>
        <end position="49"/>
    </location>
</feature>
<feature type="splice variant" id="VSP_026854" description="In isoform 2." evidence="5">
    <original>SPQEAPSQPPATYSLVNKVKNKKTVSIPSYIEPEDD</original>
    <variation>YGVLLCHPGWSAMARSRLTASSASRVHAILLPQPPE</variation>
    <location>
        <begin position="95"/>
        <end position="130"/>
    </location>
</feature>
<feature type="splice variant" id="VSP_026855" description="In isoform 2." evidence="5">
    <location>
        <begin position="131"/>
        <end position="145"/>
    </location>
</feature>
<feature type="mutagenesis site" description="Inhibits interaction with GRB2." evidence="4">
    <original>Y</original>
    <variation>F</variation>
    <location>
        <position position="69"/>
    </location>
</feature>
<feature type="mutagenesis site" description="Inhibits interaction with LYN." evidence="4">
    <location>
        <begin position="81"/>
        <end position="86"/>
    </location>
</feature>
<feature type="mutagenesis site" description="Inhibits interaction with CSK. Stimulates activation of several downstream signaling pathways." evidence="4">
    <original>Y</original>
    <variation>F</variation>
    <location>
        <position position="107"/>
    </location>
</feature>
<feature type="mutagenesis site" description="Inhibits interaction with BLNK. Inhibits activation of several downstream signaling pathways." evidence="4">
    <original>Y</original>
    <variation>F</variation>
    <location>
        <position position="131"/>
    </location>
</feature>
<comment type="function">
    <text evidence="1 4">Lipid tetraspanin-associated transmembrane adapter/mediator that acts as a scaffold for Src-family kinases and other signaling proteins in immune cells (PubMed:21930792). It is involved in major histocompatibility complex class II (MHC-II) signaling transduction in B cells, where it is required in generating the calcium response and enhancing ERK activity upon MHC-II stimulation (PubMed:21930792). In dendritic cells, it is involved in sustaining CLEC7A/DECTIN1 signaling after CLEC7A activation by fungal beta-glucans (By similarity). It also acts as an agonist-inducible signaling adapter for TLR1, TLR2, TLR3, TLR4, and TLR7 by selectively enabling the expression of pro-inflammatory cytokines IL6 and IL12B in macrophages and acting as a scaffold for phosphorylation of Toll-like receptors by Src-family kinases (By similarity).</text>
</comment>
<comment type="subunit">
    <text evidence="1 4">Interacts with CD37, CD53 and CD81 (PubMed:21930792). Interacts (via proline-rich region) with LYN (via SH3 domain) (PubMed:21930792). Interacts with CSK (via SH2 domain); this interaction is dependent on phosphorylation of Tyr-107 (PubMed:21930792). Interacts with BLNK (via SH2 domain); this interaction is dependent on phosphorylation of Tyr-131 (PubMed:21930792). Interacts with GRB2 (via SH2 domain); this interaction may be dependent on phosphorylation of Tyr-69 (By similarity). Interacts with TLR4; this interaction occurs upon lipopolysaccharide activation of TLR4 and is enhanced by phosphorylation of Tyr-107 by LYN (By similarity). This interaction facilitates the phosphorylation of TLR4 by LYN which elicits a selective cytokine response in macrophages (By similarity).</text>
</comment>
<comment type="interaction">
    <interactant intactId="EBI-2872510">
        <id>Q6UWF3</id>
    </interactant>
    <interactant intactId="EBI-14404745">
        <id>Q6ZN84</id>
        <label>CCDC81</label>
    </interactant>
    <organismsDiffer>false</organismsDiffer>
    <experiments>5</experiments>
</comment>
<comment type="interaction">
    <interactant intactId="EBI-2872510">
        <id>Q6UWF3</id>
    </interactant>
    <interactant intactId="EBI-1380630">
        <id>P41240</id>
        <label>CSK</label>
    </interactant>
    <organismsDiffer>false</organismsDiffer>
    <experiments>3</experiments>
</comment>
<comment type="interaction">
    <interactant intactId="EBI-2872510">
        <id>Q6UWF3</id>
    </interactant>
    <interactant intactId="EBI-79452">
        <id>P07948</id>
        <label>LYN</label>
    </interactant>
    <organismsDiffer>false</organismsDiffer>
    <experiments>3</experiments>
</comment>
<comment type="interaction">
    <interactant intactId="EBI-2872510">
        <id>Q6UWF3</id>
    </interactant>
    <interactant intactId="EBI-16439278">
        <id>Q6FHY5</id>
        <label>MEOX2</label>
    </interactant>
    <organismsDiffer>false</organismsDiffer>
    <experiments>3</experiments>
</comment>
<comment type="subcellular location">
    <subcellularLocation>
        <location evidence="8">Cell membrane</location>
        <topology evidence="2">Single-pass membrane protein</topology>
    </subcellularLocation>
    <subcellularLocation>
        <location evidence="4">Cell membrane</location>
        <topology evidence="4">Lipid-anchor</topology>
    </subcellularLocation>
    <subcellularLocation>
        <location evidence="1">Cytoplasmic vesicle</location>
        <location evidence="1">Phagosome</location>
    </subcellularLocation>
    <subcellularLocation>
        <location evidence="1">Cell projection</location>
        <location evidence="1">Ruffle</location>
    </subcellularLocation>
    <subcellularLocation>
        <location evidence="1">Cell projection</location>
        <location evidence="1">Filopodium</location>
    </subcellularLocation>
    <text evidence="1 4">Together with MHC-II, associates with lipid-enriched microdomains called tetraspanin-enriched microdomains (TEMs) (PubMed:21930792). Rapidly translocates into immunological synapse (IS) at cell-cell contacts between antigen-presenting cells (APCs) and T-cells (PubMed:21930792). Colocalized with tetraspanins CD37, CD53, and CD81 at the uropod (PubMed:21930792). Present at regions of cell-cell contacts but also at the leading edge of migrating cells (PubMed:21930792). Localizes to phagosomes in dendritic cells after exposure to particulate beta-glucan (By similarity).</text>
</comment>
<comment type="alternative products">
    <event type="alternative splicing"/>
    <isoform>
        <id>Q6UWF3-1</id>
        <name>1</name>
        <sequence type="displayed"/>
    </isoform>
    <isoform>
        <id>Q6UWF3-2</id>
        <name>2</name>
        <sequence type="described" ref="VSP_026853 VSP_026854 VSP_026855"/>
    </isoform>
    <isoform>
        <id>Q6UWF3-3</id>
        <name>3</name>
        <sequence type="described" ref="VSP_026853"/>
    </isoform>
</comment>
<comment type="tissue specificity">
    <text evidence="4">Expressed in antigen-presenting cells, like peripheral blood leukocytes and monocyte-derived dendritic cells (MDDC) (at protein level) (PubMed:21930792). Highly expressed in lymph nodes and spleen. Expressed in antigen-presenting cells (PubMed:21930792). Faintly expressed in the majority of nonimmune system tissues (PubMed:21930792).</text>
</comment>
<comment type="PTM">
    <text evidence="1 4">Phosphorylated by the Src-family protein tyrosine kinases LYN and SRC (PubMed:21930792). Phosphorylation occurs on tyrosine residues upon MHC-II stimulation (PubMed:21930792). Phosphorylation also occurs on tyrosine residues after activation of CLEC7A/DECTIN1 by particulate beta-glucan (By similarity). Lipopolysaccharide (LPS) induces phosphorylation of Tyr-69, Tyr-107 and Tyr-131 differentially to allow temporal recruitment of effector proteins GRB2, CSK and BLNK (By similarity). Phosphorylation of Tyr-69 is immediately induced by LPS stimulation and allows GRB2 to bind (By similarity). Tyr-107 is phosphorylated 5 minutes after LPS stimulation, which then allows CSK to bind, followed by phosphorylation of Tyr-131 10 minutes after LPS induction, which allows BLNK to bind (By similarity). Phosphorylation at Tyr-107 by LYN occurs after activation of TLR4 by lipopolysaccharide; phosphorylation enhances binding to TLR4 (By similarity).</text>
</comment>
<comment type="PTM">
    <text evidence="4">Palmitoylated.</text>
</comment>
<comment type="caution">
    <text evidence="8">It is uncertain whether Met-1 or Met-12 is the initiator.</text>
</comment>
<gene>
    <name type="primary">SCIMP</name>
    <name type="synonym">C17orf87</name>
    <name type="ORF">UNQ5783/PRO16090</name>
</gene>
<evidence type="ECO:0000250" key="1">
    <source>
        <dbReference type="UniProtKB" id="Q3UU41"/>
    </source>
</evidence>
<evidence type="ECO:0000255" key="2"/>
<evidence type="ECO:0000256" key="3">
    <source>
        <dbReference type="SAM" id="MobiDB-lite"/>
    </source>
</evidence>
<evidence type="ECO:0000269" key="4">
    <source>
    </source>
</evidence>
<evidence type="ECO:0000303" key="5">
    <source>
    </source>
</evidence>
<evidence type="ECO:0000303" key="6">
    <source>
    </source>
</evidence>
<evidence type="ECO:0000303" key="7">
    <source ref="3"/>
</evidence>
<evidence type="ECO:0000305" key="8"/>
<evidence type="ECO:0000305" key="9">
    <source>
    </source>
</evidence>
<proteinExistence type="evidence at protein level"/>
<reference key="1">
    <citation type="journal article" date="2003" name="Genome Res.">
        <title>The secreted protein discovery initiative (SPDI), a large-scale effort to identify novel human secreted and transmembrane proteins: a bioinformatics assessment.</title>
        <authorList>
            <person name="Clark H.F."/>
            <person name="Gurney A.L."/>
            <person name="Abaya E."/>
            <person name="Baker K."/>
            <person name="Baldwin D.T."/>
            <person name="Brush J."/>
            <person name="Chen J."/>
            <person name="Chow B."/>
            <person name="Chui C."/>
            <person name="Crowley C."/>
            <person name="Currell B."/>
            <person name="Deuel B."/>
            <person name="Dowd P."/>
            <person name="Eaton D."/>
            <person name="Foster J.S."/>
            <person name="Grimaldi C."/>
            <person name="Gu Q."/>
            <person name="Hass P.E."/>
            <person name="Heldens S."/>
            <person name="Huang A."/>
            <person name="Kim H.S."/>
            <person name="Klimowski L."/>
            <person name="Jin Y."/>
            <person name="Johnson S."/>
            <person name="Lee J."/>
            <person name="Lewis L."/>
            <person name="Liao D."/>
            <person name="Mark M.R."/>
            <person name="Robbie E."/>
            <person name="Sanchez C."/>
            <person name="Schoenfeld J."/>
            <person name="Seshagiri S."/>
            <person name="Simmons L."/>
            <person name="Singh J."/>
            <person name="Smith V."/>
            <person name="Stinson J."/>
            <person name="Vagts A."/>
            <person name="Vandlen R.L."/>
            <person name="Watanabe C."/>
            <person name="Wieand D."/>
            <person name="Woods K."/>
            <person name="Xie M.-H."/>
            <person name="Yansura D.G."/>
            <person name="Yi S."/>
            <person name="Yu G."/>
            <person name="Yuan J."/>
            <person name="Zhang M."/>
            <person name="Zhang Z."/>
            <person name="Goddard A.D."/>
            <person name="Wood W.I."/>
            <person name="Godowski P.J."/>
            <person name="Gray A.M."/>
        </authorList>
    </citation>
    <scope>NUCLEOTIDE SEQUENCE [LARGE SCALE MRNA] (ISOFORM 1)</scope>
</reference>
<reference key="2">
    <citation type="journal article" date="2004" name="Nat. Genet.">
        <title>Complete sequencing and characterization of 21,243 full-length human cDNAs.</title>
        <authorList>
            <person name="Ota T."/>
            <person name="Suzuki Y."/>
            <person name="Nishikawa T."/>
            <person name="Otsuki T."/>
            <person name="Sugiyama T."/>
            <person name="Irie R."/>
            <person name="Wakamatsu A."/>
            <person name="Hayashi K."/>
            <person name="Sato H."/>
            <person name="Nagai K."/>
            <person name="Kimura K."/>
            <person name="Makita H."/>
            <person name="Sekine M."/>
            <person name="Obayashi M."/>
            <person name="Nishi T."/>
            <person name="Shibahara T."/>
            <person name="Tanaka T."/>
            <person name="Ishii S."/>
            <person name="Yamamoto J."/>
            <person name="Saito K."/>
            <person name="Kawai Y."/>
            <person name="Isono Y."/>
            <person name="Nakamura Y."/>
            <person name="Nagahari K."/>
            <person name="Murakami K."/>
            <person name="Yasuda T."/>
            <person name="Iwayanagi T."/>
            <person name="Wagatsuma M."/>
            <person name="Shiratori A."/>
            <person name="Sudo H."/>
            <person name="Hosoiri T."/>
            <person name="Kaku Y."/>
            <person name="Kodaira H."/>
            <person name="Kondo H."/>
            <person name="Sugawara M."/>
            <person name="Takahashi M."/>
            <person name="Kanda K."/>
            <person name="Yokoi T."/>
            <person name="Furuya T."/>
            <person name="Kikkawa E."/>
            <person name="Omura Y."/>
            <person name="Abe K."/>
            <person name="Kamihara K."/>
            <person name="Katsuta N."/>
            <person name="Sato K."/>
            <person name="Tanikawa M."/>
            <person name="Yamazaki M."/>
            <person name="Ninomiya K."/>
            <person name="Ishibashi T."/>
            <person name="Yamashita H."/>
            <person name="Murakawa K."/>
            <person name="Fujimori K."/>
            <person name="Tanai H."/>
            <person name="Kimata M."/>
            <person name="Watanabe M."/>
            <person name="Hiraoka S."/>
            <person name="Chiba Y."/>
            <person name="Ishida S."/>
            <person name="Ono Y."/>
            <person name="Takiguchi S."/>
            <person name="Watanabe S."/>
            <person name="Yosida M."/>
            <person name="Hotuta T."/>
            <person name="Kusano J."/>
            <person name="Kanehori K."/>
            <person name="Takahashi-Fujii A."/>
            <person name="Hara H."/>
            <person name="Tanase T.-O."/>
            <person name="Nomura Y."/>
            <person name="Togiya S."/>
            <person name="Komai F."/>
            <person name="Hara R."/>
            <person name="Takeuchi K."/>
            <person name="Arita M."/>
            <person name="Imose N."/>
            <person name="Musashino K."/>
            <person name="Yuuki H."/>
            <person name="Oshima A."/>
            <person name="Sasaki N."/>
            <person name="Aotsuka S."/>
            <person name="Yoshikawa Y."/>
            <person name="Matsunawa H."/>
            <person name="Ichihara T."/>
            <person name="Shiohata N."/>
            <person name="Sano S."/>
            <person name="Moriya S."/>
            <person name="Momiyama H."/>
            <person name="Satoh N."/>
            <person name="Takami S."/>
            <person name="Terashima Y."/>
            <person name="Suzuki O."/>
            <person name="Nakagawa S."/>
            <person name="Senoh A."/>
            <person name="Mizoguchi H."/>
            <person name="Goto Y."/>
            <person name="Shimizu F."/>
            <person name="Wakebe H."/>
            <person name="Hishigaki H."/>
            <person name="Watanabe T."/>
            <person name="Sugiyama A."/>
            <person name="Takemoto M."/>
            <person name="Kawakami B."/>
            <person name="Yamazaki M."/>
            <person name="Watanabe K."/>
            <person name="Kumagai A."/>
            <person name="Itakura S."/>
            <person name="Fukuzumi Y."/>
            <person name="Fujimori Y."/>
            <person name="Komiyama M."/>
            <person name="Tashiro H."/>
            <person name="Tanigami A."/>
            <person name="Fujiwara T."/>
            <person name="Ono T."/>
            <person name="Yamada K."/>
            <person name="Fujii Y."/>
            <person name="Ozaki K."/>
            <person name="Hirao M."/>
            <person name="Ohmori Y."/>
            <person name="Kawabata A."/>
            <person name="Hikiji T."/>
            <person name="Kobatake N."/>
            <person name="Inagaki H."/>
            <person name="Ikema Y."/>
            <person name="Okamoto S."/>
            <person name="Okitani R."/>
            <person name="Kawakami T."/>
            <person name="Noguchi S."/>
            <person name="Itoh T."/>
            <person name="Shigeta K."/>
            <person name="Senba T."/>
            <person name="Matsumura K."/>
            <person name="Nakajima Y."/>
            <person name="Mizuno T."/>
            <person name="Morinaga M."/>
            <person name="Sasaki M."/>
            <person name="Togashi T."/>
            <person name="Oyama M."/>
            <person name="Hata H."/>
            <person name="Watanabe M."/>
            <person name="Komatsu T."/>
            <person name="Mizushima-Sugano J."/>
            <person name="Satoh T."/>
            <person name="Shirai Y."/>
            <person name="Takahashi Y."/>
            <person name="Nakagawa K."/>
            <person name="Okumura K."/>
            <person name="Nagase T."/>
            <person name="Nomura N."/>
            <person name="Kikuchi H."/>
            <person name="Masuho Y."/>
            <person name="Yamashita R."/>
            <person name="Nakai K."/>
            <person name="Yada T."/>
            <person name="Nakamura Y."/>
            <person name="Ohara O."/>
            <person name="Isogai T."/>
            <person name="Sugano S."/>
        </authorList>
    </citation>
    <scope>NUCLEOTIDE SEQUENCE [LARGE SCALE MRNA] (ISOFORMS 1 AND 2)</scope>
    <source>
        <tissue>Spleen</tissue>
        <tissue>Umbilical cord blood</tissue>
    </source>
</reference>
<reference key="3">
    <citation type="submission" date="2006-06" db="EMBL/GenBank/DDBJ databases">
        <title>A computer system platform used to predict novel genes.</title>
        <authorList>
            <person name="Yu Z."/>
            <person name="Zheng Z."/>
            <person name="Tang T."/>
            <person name="Fu Y."/>
        </authorList>
    </citation>
    <scope>NUCLEOTIDE SEQUENCE [LARGE SCALE MRNA] (ISOFORM 3)</scope>
</reference>
<reference key="4">
    <citation type="journal article" date="2006" name="Nature">
        <title>DNA sequence of human chromosome 17 and analysis of rearrangement in the human lineage.</title>
        <authorList>
            <person name="Zody M.C."/>
            <person name="Garber M."/>
            <person name="Adams D.J."/>
            <person name="Sharpe T."/>
            <person name="Harrow J."/>
            <person name="Lupski J.R."/>
            <person name="Nicholson C."/>
            <person name="Searle S.M."/>
            <person name="Wilming L."/>
            <person name="Young S.K."/>
            <person name="Abouelleil A."/>
            <person name="Allen N.R."/>
            <person name="Bi W."/>
            <person name="Bloom T."/>
            <person name="Borowsky M.L."/>
            <person name="Bugalter B.E."/>
            <person name="Butler J."/>
            <person name="Chang J.L."/>
            <person name="Chen C.-K."/>
            <person name="Cook A."/>
            <person name="Corum B."/>
            <person name="Cuomo C.A."/>
            <person name="de Jong P.J."/>
            <person name="DeCaprio D."/>
            <person name="Dewar K."/>
            <person name="FitzGerald M."/>
            <person name="Gilbert J."/>
            <person name="Gibson R."/>
            <person name="Gnerre S."/>
            <person name="Goldstein S."/>
            <person name="Grafham D.V."/>
            <person name="Grocock R."/>
            <person name="Hafez N."/>
            <person name="Hagopian D.S."/>
            <person name="Hart E."/>
            <person name="Norman C.H."/>
            <person name="Humphray S."/>
            <person name="Jaffe D.B."/>
            <person name="Jones M."/>
            <person name="Kamal M."/>
            <person name="Khodiyar V.K."/>
            <person name="LaButti K."/>
            <person name="Laird G."/>
            <person name="Lehoczky J."/>
            <person name="Liu X."/>
            <person name="Lokyitsang T."/>
            <person name="Loveland J."/>
            <person name="Lui A."/>
            <person name="Macdonald P."/>
            <person name="Major J.E."/>
            <person name="Matthews L."/>
            <person name="Mauceli E."/>
            <person name="McCarroll S.A."/>
            <person name="Mihalev A.H."/>
            <person name="Mudge J."/>
            <person name="Nguyen C."/>
            <person name="Nicol R."/>
            <person name="O'Leary S.B."/>
            <person name="Osoegawa K."/>
            <person name="Schwartz D.C."/>
            <person name="Shaw-Smith C."/>
            <person name="Stankiewicz P."/>
            <person name="Steward C."/>
            <person name="Swarbreck D."/>
            <person name="Venkataraman V."/>
            <person name="Whittaker C.A."/>
            <person name="Yang X."/>
            <person name="Zimmer A.R."/>
            <person name="Bradley A."/>
            <person name="Hubbard T."/>
            <person name="Birren B.W."/>
            <person name="Rogers J."/>
            <person name="Lander E.S."/>
            <person name="Nusbaum C."/>
        </authorList>
    </citation>
    <scope>NUCLEOTIDE SEQUENCE [LARGE SCALE GENOMIC DNA]</scope>
</reference>
<reference key="5">
    <citation type="submission" date="2005-09" db="EMBL/GenBank/DDBJ databases">
        <authorList>
            <person name="Mural R.J."/>
            <person name="Istrail S."/>
            <person name="Sutton G.G."/>
            <person name="Florea L."/>
            <person name="Halpern A.L."/>
            <person name="Mobarry C.M."/>
            <person name="Lippert R."/>
            <person name="Walenz B."/>
            <person name="Shatkay H."/>
            <person name="Dew I."/>
            <person name="Miller J.R."/>
            <person name="Flanigan M.J."/>
            <person name="Edwards N.J."/>
            <person name="Bolanos R."/>
            <person name="Fasulo D."/>
            <person name="Halldorsson B.V."/>
            <person name="Hannenhalli S."/>
            <person name="Turner R."/>
            <person name="Yooseph S."/>
            <person name="Lu F."/>
            <person name="Nusskern D.R."/>
            <person name="Shue B.C."/>
            <person name="Zheng X.H."/>
            <person name="Zhong F."/>
            <person name="Delcher A.L."/>
            <person name="Huson D.H."/>
            <person name="Kravitz S.A."/>
            <person name="Mouchard L."/>
            <person name="Reinert K."/>
            <person name="Remington K.A."/>
            <person name="Clark A.G."/>
            <person name="Waterman M.S."/>
            <person name="Eichler E.E."/>
            <person name="Adams M.D."/>
            <person name="Hunkapiller M.W."/>
            <person name="Myers E.W."/>
            <person name="Venter J.C."/>
        </authorList>
    </citation>
    <scope>NUCLEOTIDE SEQUENCE [LARGE SCALE GENOMIC DNA]</scope>
</reference>
<reference key="6">
    <citation type="journal article" date="2004" name="Genome Res.">
        <title>The status, quality, and expansion of the NIH full-length cDNA project: the Mammalian Gene Collection (MGC).</title>
        <authorList>
            <consortium name="The MGC Project Team"/>
        </authorList>
    </citation>
    <scope>NUCLEOTIDE SEQUENCE [LARGE SCALE MRNA] (ISOFORMS 1 AND 3)</scope>
    <source>
        <tissue>Brain</tissue>
    </source>
</reference>
<reference key="7">
    <citation type="journal article" date="2011" name="Mol. Cell. Biol.">
        <title>SCIMP, a transmembrane adapter protein involved in major histocompatibility complex class II signaling.</title>
        <authorList>
            <person name="Draber P."/>
            <person name="Vonkova I."/>
            <person name="Stepanek O."/>
            <person name="Hrdinka M."/>
            <person name="Kucova M."/>
            <person name="Skopcova T."/>
            <person name="Otahal P."/>
            <person name="Angelisova P."/>
            <person name="Horejsi V."/>
            <person name="Yeung M."/>
            <person name="Weiss A."/>
            <person name="Brdicka T."/>
        </authorList>
    </citation>
    <scope>FUNCTION</scope>
    <scope>INTERACTION WITH BLNK; CD37; CD53; CD81; CSK AND LYN</scope>
    <scope>PALMITOYLATION AT CYS-40 AND CYS-42</scope>
    <scope>PHOSPHORYLATION AT TYR-69; TYR-107 AND TYR-131</scope>
    <scope>MUTAGENESIS OF TYR-69; 81-PRO--PRO-86; TYR-107 AND TYR-131</scope>
    <scope>SUBCELLULAR LOCATION</scope>
    <scope>TISSUE SPECIFICITY</scope>
</reference>
<sequence>MDTFTVQDSTAMSWWRNNFWIILAVAIIVVSVGLGLILYCVCKWQLRRGKKWEIAKPLKHKQVDEEKMYENVLNESPVQLPPLPPRNWPSLEDSSPQEAPSQPPATYSLVNKVKNKKTVSIPSYIEPEDDYDDVEIPANTEKASF</sequence>